<gene>
    <name type="primary">etnkA</name>
    <name type="ORF">DDB_G0274955</name>
</gene>
<organism>
    <name type="scientific">Dictyostelium discoideum</name>
    <name type="common">Social amoeba</name>
    <dbReference type="NCBI Taxonomy" id="44689"/>
    <lineage>
        <taxon>Eukaryota</taxon>
        <taxon>Amoebozoa</taxon>
        <taxon>Evosea</taxon>
        <taxon>Eumycetozoa</taxon>
        <taxon>Dictyostelia</taxon>
        <taxon>Dictyosteliales</taxon>
        <taxon>Dictyosteliaceae</taxon>
        <taxon>Dictyostelium</taxon>
    </lineage>
</organism>
<sequence>MMAKTKGSYEVFHYTVTKDKVNKGLCDIARYFVPEYRNSKDEDLTIQKLNGGITNVLYLVEDKNIEQKYRYLPVVIRLYGYKSEEIIDRKNELIIQTEADQNGLGAKFYGLFDNGCIYGFIKGEPLAYEDISKPTMQTCIAKEIAQWHSIEMPTRKNPSLWPTIKKWAALAPDVYPVPEKNEYYQSINVKKMIEEGKMLEQRLAQLNSPIVFCHNDLLSGNIIYDPSQNCASFIDFEYANYNFRGLELGNHFNEYAGFGPDYSLYPNKESQIHFLTDYHRSLFKTEPTQDELEKLYIESNQFSLASHLYWGFWAIVQAMNSQIDFDYLEYGKARFDRYYETRDQFLNLN</sequence>
<proteinExistence type="inferred from homology"/>
<protein>
    <recommendedName>
        <fullName>Probable ethanolamine kinase A</fullName>
        <ecNumber>2.7.1.82</ecNumber>
    </recommendedName>
</protein>
<dbReference type="EC" id="2.7.1.82"/>
<dbReference type="EMBL" id="AAFI02000012">
    <property type="protein sequence ID" value="EAL70370.1"/>
    <property type="molecule type" value="Genomic_DNA"/>
</dbReference>
<dbReference type="RefSeq" id="XP_644218.1">
    <property type="nucleotide sequence ID" value="XM_639126.1"/>
</dbReference>
<dbReference type="SMR" id="Q869T9"/>
<dbReference type="FunCoup" id="Q869T9">
    <property type="interactions" value="698"/>
</dbReference>
<dbReference type="STRING" id="44689.Q869T9"/>
<dbReference type="PaxDb" id="44689-DDB0267033"/>
<dbReference type="EnsemblProtists" id="EAL70370">
    <property type="protein sequence ID" value="EAL70370"/>
    <property type="gene ID" value="DDB_G0274955"/>
</dbReference>
<dbReference type="GeneID" id="8619647"/>
<dbReference type="KEGG" id="ddi:DDB_G0274955"/>
<dbReference type="dictyBase" id="DDB_G0274955">
    <property type="gene designation" value="etnkA"/>
</dbReference>
<dbReference type="VEuPathDB" id="AmoebaDB:DDB_G0274955"/>
<dbReference type="eggNOG" id="KOG4720">
    <property type="taxonomic scope" value="Eukaryota"/>
</dbReference>
<dbReference type="HOGENOM" id="CLU_012712_1_0_1"/>
<dbReference type="InParanoid" id="Q869T9"/>
<dbReference type="OMA" id="EAPYYKI"/>
<dbReference type="PhylomeDB" id="Q869T9"/>
<dbReference type="Reactome" id="R-DDI-1483213">
    <property type="pathway name" value="Synthesis of PE"/>
</dbReference>
<dbReference type="UniPathway" id="UPA00558">
    <property type="reaction ID" value="UER00741"/>
</dbReference>
<dbReference type="PRO" id="PR:Q869T9"/>
<dbReference type="Proteomes" id="UP000002195">
    <property type="component" value="Chromosome 2"/>
</dbReference>
<dbReference type="GO" id="GO:0005737">
    <property type="term" value="C:cytoplasm"/>
    <property type="evidence" value="ECO:0000318"/>
    <property type="project" value="GO_Central"/>
</dbReference>
<dbReference type="GO" id="GO:0005524">
    <property type="term" value="F:ATP binding"/>
    <property type="evidence" value="ECO:0007669"/>
    <property type="project" value="UniProtKB-KW"/>
</dbReference>
<dbReference type="GO" id="GO:0004305">
    <property type="term" value="F:ethanolamine kinase activity"/>
    <property type="evidence" value="ECO:0000318"/>
    <property type="project" value="GO_Central"/>
</dbReference>
<dbReference type="GO" id="GO:0006646">
    <property type="term" value="P:phosphatidylethanolamine biosynthetic process"/>
    <property type="evidence" value="ECO:0000318"/>
    <property type="project" value="GO_Central"/>
</dbReference>
<dbReference type="CDD" id="cd05157">
    <property type="entry name" value="ETNK_euk"/>
    <property type="match status" value="1"/>
</dbReference>
<dbReference type="Gene3D" id="3.90.1200.10">
    <property type="match status" value="1"/>
</dbReference>
<dbReference type="Gene3D" id="3.30.200.20">
    <property type="entry name" value="Phosphorylase Kinase, domain 1"/>
    <property type="match status" value="1"/>
</dbReference>
<dbReference type="InterPro" id="IPR011009">
    <property type="entry name" value="Kinase-like_dom_sf"/>
</dbReference>
<dbReference type="PANTHER" id="PTHR22603">
    <property type="entry name" value="CHOLINE/ETHANOALAMINE KINASE"/>
    <property type="match status" value="1"/>
</dbReference>
<dbReference type="PANTHER" id="PTHR22603:SF66">
    <property type="entry name" value="ETHANOLAMINE KINASE"/>
    <property type="match status" value="1"/>
</dbReference>
<dbReference type="Pfam" id="PF01633">
    <property type="entry name" value="Choline_kinase"/>
    <property type="match status" value="1"/>
</dbReference>
<dbReference type="SUPFAM" id="SSF56112">
    <property type="entry name" value="Protein kinase-like (PK-like)"/>
    <property type="match status" value="1"/>
</dbReference>
<comment type="function">
    <text evidence="1">Highly specific for ethanolamine phosphorylation. May be a rate-controlling step in phosphatidylethanolamine biosynthesis (By similarity).</text>
</comment>
<comment type="catalytic activity">
    <reaction>
        <text>ethanolamine + ATP = phosphoethanolamine + ADP + H(+)</text>
        <dbReference type="Rhea" id="RHEA:13069"/>
        <dbReference type="ChEBI" id="CHEBI:15378"/>
        <dbReference type="ChEBI" id="CHEBI:30616"/>
        <dbReference type="ChEBI" id="CHEBI:57603"/>
        <dbReference type="ChEBI" id="CHEBI:58190"/>
        <dbReference type="ChEBI" id="CHEBI:456216"/>
        <dbReference type="EC" id="2.7.1.82"/>
    </reaction>
</comment>
<comment type="pathway">
    <text>Phospholipid metabolism; phosphatidylethanolamine biosynthesis; phosphatidylethanolamine from ethanolamine: step 1/3.</text>
</comment>
<comment type="subcellular location">
    <subcellularLocation>
        <location evidence="1">Cytoplasm</location>
    </subcellularLocation>
</comment>
<comment type="similarity">
    <text evidence="2">Belongs to the choline/ethanolamine kinase family.</text>
</comment>
<evidence type="ECO:0000250" key="1"/>
<evidence type="ECO:0000305" key="2"/>
<keyword id="KW-0067">ATP-binding</keyword>
<keyword id="KW-0963">Cytoplasm</keyword>
<keyword id="KW-0418">Kinase</keyword>
<keyword id="KW-0444">Lipid biosynthesis</keyword>
<keyword id="KW-0443">Lipid metabolism</keyword>
<keyword id="KW-0547">Nucleotide-binding</keyword>
<keyword id="KW-0594">Phospholipid biosynthesis</keyword>
<keyword id="KW-1208">Phospholipid metabolism</keyword>
<keyword id="KW-1185">Reference proteome</keyword>
<keyword id="KW-0808">Transferase</keyword>
<reference key="1">
    <citation type="journal article" date="2002" name="Nature">
        <title>Sequence and analysis of chromosome 2 of Dictyostelium discoideum.</title>
        <authorList>
            <person name="Gloeckner G."/>
            <person name="Eichinger L."/>
            <person name="Szafranski K."/>
            <person name="Pachebat J.A."/>
            <person name="Bankier A.T."/>
            <person name="Dear P.H."/>
            <person name="Lehmann R."/>
            <person name="Baumgart C."/>
            <person name="Parra G."/>
            <person name="Abril J.F."/>
            <person name="Guigo R."/>
            <person name="Kumpf K."/>
            <person name="Tunggal B."/>
            <person name="Cox E.C."/>
            <person name="Quail M.A."/>
            <person name="Platzer M."/>
            <person name="Rosenthal A."/>
            <person name="Noegel A.A."/>
        </authorList>
    </citation>
    <scope>NUCLEOTIDE SEQUENCE [LARGE SCALE GENOMIC DNA]</scope>
    <source>
        <strain>AX4</strain>
    </source>
</reference>
<reference key="2">
    <citation type="journal article" date="2005" name="Nature">
        <title>The genome of the social amoeba Dictyostelium discoideum.</title>
        <authorList>
            <person name="Eichinger L."/>
            <person name="Pachebat J.A."/>
            <person name="Gloeckner G."/>
            <person name="Rajandream M.A."/>
            <person name="Sucgang R."/>
            <person name="Berriman M."/>
            <person name="Song J."/>
            <person name="Olsen R."/>
            <person name="Szafranski K."/>
            <person name="Xu Q."/>
            <person name="Tunggal B."/>
            <person name="Kummerfeld S."/>
            <person name="Madera M."/>
            <person name="Konfortov B.A."/>
            <person name="Rivero F."/>
            <person name="Bankier A.T."/>
            <person name="Lehmann R."/>
            <person name="Hamlin N."/>
            <person name="Davies R."/>
            <person name="Gaudet P."/>
            <person name="Fey P."/>
            <person name="Pilcher K."/>
            <person name="Chen G."/>
            <person name="Saunders D."/>
            <person name="Sodergren E.J."/>
            <person name="Davis P."/>
            <person name="Kerhornou A."/>
            <person name="Nie X."/>
            <person name="Hall N."/>
            <person name="Anjard C."/>
            <person name="Hemphill L."/>
            <person name="Bason N."/>
            <person name="Farbrother P."/>
            <person name="Desany B."/>
            <person name="Just E."/>
            <person name="Morio T."/>
            <person name="Rost R."/>
            <person name="Churcher C.M."/>
            <person name="Cooper J."/>
            <person name="Haydock S."/>
            <person name="van Driessche N."/>
            <person name="Cronin A."/>
            <person name="Goodhead I."/>
            <person name="Muzny D.M."/>
            <person name="Mourier T."/>
            <person name="Pain A."/>
            <person name="Lu M."/>
            <person name="Harper D."/>
            <person name="Lindsay R."/>
            <person name="Hauser H."/>
            <person name="James K.D."/>
            <person name="Quiles M."/>
            <person name="Madan Babu M."/>
            <person name="Saito T."/>
            <person name="Buchrieser C."/>
            <person name="Wardroper A."/>
            <person name="Felder M."/>
            <person name="Thangavelu M."/>
            <person name="Johnson D."/>
            <person name="Knights A."/>
            <person name="Loulseged H."/>
            <person name="Mungall K.L."/>
            <person name="Oliver K."/>
            <person name="Price C."/>
            <person name="Quail M.A."/>
            <person name="Urushihara H."/>
            <person name="Hernandez J."/>
            <person name="Rabbinowitsch E."/>
            <person name="Steffen D."/>
            <person name="Sanders M."/>
            <person name="Ma J."/>
            <person name="Kohara Y."/>
            <person name="Sharp S."/>
            <person name="Simmonds M.N."/>
            <person name="Spiegler S."/>
            <person name="Tivey A."/>
            <person name="Sugano S."/>
            <person name="White B."/>
            <person name="Walker D."/>
            <person name="Woodward J.R."/>
            <person name="Winckler T."/>
            <person name="Tanaka Y."/>
            <person name="Shaulsky G."/>
            <person name="Schleicher M."/>
            <person name="Weinstock G.M."/>
            <person name="Rosenthal A."/>
            <person name="Cox E.C."/>
            <person name="Chisholm R.L."/>
            <person name="Gibbs R.A."/>
            <person name="Loomis W.F."/>
            <person name="Platzer M."/>
            <person name="Kay R.R."/>
            <person name="Williams J.G."/>
            <person name="Dear P.H."/>
            <person name="Noegel A.A."/>
            <person name="Barrell B.G."/>
            <person name="Kuspa A."/>
        </authorList>
    </citation>
    <scope>NUCLEOTIDE SEQUENCE [LARGE SCALE GENOMIC DNA]</scope>
    <source>
        <strain>AX4</strain>
    </source>
</reference>
<feature type="chain" id="PRO_0000332721" description="Probable ethanolamine kinase A">
    <location>
        <begin position="1"/>
        <end position="349"/>
    </location>
</feature>
<name>EKIA_DICDI</name>
<accession>Q869T9</accession>
<accession>Q554V5</accession>